<accession>B5XP41</accession>
<organism>
    <name type="scientific">Klebsiella pneumoniae (strain 342)</name>
    <dbReference type="NCBI Taxonomy" id="507522"/>
    <lineage>
        <taxon>Bacteria</taxon>
        <taxon>Pseudomonadati</taxon>
        <taxon>Pseudomonadota</taxon>
        <taxon>Gammaproteobacteria</taxon>
        <taxon>Enterobacterales</taxon>
        <taxon>Enterobacteriaceae</taxon>
        <taxon>Klebsiella/Raoultella group</taxon>
        <taxon>Klebsiella</taxon>
        <taxon>Klebsiella pneumoniae complex</taxon>
    </lineage>
</organism>
<sequence length="190" mass="21513">MPRANEIKKGMVLNYNGKLLIVKNIDIQSPSARGAATLYKMRFSDVRTGLKVEERFKGDDIVDTVTLTRRFVDFSYVDGNEYVFMDKEDYTPYTFTKEQIEEELQFIPEGGMPDMQVLTWDGQLLALELPQTVDLEIIETAPGIKGASASSRTKPATMSTGLVIQVPEYLTTGEKIRIHIEECRYMGRAD</sequence>
<name>EFPL_KLEP3</name>
<evidence type="ECO:0000255" key="1">
    <source>
        <dbReference type="HAMAP-Rule" id="MF_00646"/>
    </source>
</evidence>
<reference key="1">
    <citation type="journal article" date="2008" name="PLoS Genet.">
        <title>Complete genome sequence of the N2-fixing broad host range endophyte Klebsiella pneumoniae 342 and virulence predictions verified in mice.</title>
        <authorList>
            <person name="Fouts D.E."/>
            <person name="Tyler H.L."/>
            <person name="DeBoy R.T."/>
            <person name="Daugherty S."/>
            <person name="Ren Q."/>
            <person name="Badger J.H."/>
            <person name="Durkin A.S."/>
            <person name="Huot H."/>
            <person name="Shrivastava S."/>
            <person name="Kothari S."/>
            <person name="Dodson R.J."/>
            <person name="Mohamoud Y."/>
            <person name="Khouri H."/>
            <person name="Roesch L.F.W."/>
            <person name="Krogfelt K.A."/>
            <person name="Struve C."/>
            <person name="Triplett E.W."/>
            <person name="Methe B.A."/>
        </authorList>
    </citation>
    <scope>NUCLEOTIDE SEQUENCE [LARGE SCALE GENOMIC DNA]</scope>
    <source>
        <strain>342</strain>
    </source>
</reference>
<comment type="similarity">
    <text evidence="1">Belongs to the elongation factor P family.</text>
</comment>
<protein>
    <recommendedName>
        <fullName evidence="1">Elongation factor P-like protein</fullName>
    </recommendedName>
</protein>
<proteinExistence type="inferred from homology"/>
<feature type="chain" id="PRO_1000130919" description="Elongation factor P-like protein">
    <location>
        <begin position="1"/>
        <end position="190"/>
    </location>
</feature>
<dbReference type="EMBL" id="CP000964">
    <property type="protein sequence ID" value="ACI11354.1"/>
    <property type="molecule type" value="Genomic_DNA"/>
</dbReference>
<dbReference type="SMR" id="B5XP41"/>
<dbReference type="KEGG" id="kpe:KPK_1559"/>
<dbReference type="HOGENOM" id="CLU_074944_2_0_6"/>
<dbReference type="BioCyc" id="KPNE507522:GI0B-1559-MONOMER"/>
<dbReference type="Proteomes" id="UP000001734">
    <property type="component" value="Chromosome"/>
</dbReference>
<dbReference type="GO" id="GO:0005829">
    <property type="term" value="C:cytosol"/>
    <property type="evidence" value="ECO:0007669"/>
    <property type="project" value="UniProtKB-ARBA"/>
</dbReference>
<dbReference type="GO" id="GO:0003746">
    <property type="term" value="F:translation elongation factor activity"/>
    <property type="evidence" value="ECO:0007669"/>
    <property type="project" value="UniProtKB-UniRule"/>
</dbReference>
<dbReference type="GO" id="GO:0043043">
    <property type="term" value="P:peptide biosynthetic process"/>
    <property type="evidence" value="ECO:0007669"/>
    <property type="project" value="InterPro"/>
</dbReference>
<dbReference type="CDD" id="cd04470">
    <property type="entry name" value="S1_EF-P_repeat_1"/>
    <property type="match status" value="1"/>
</dbReference>
<dbReference type="CDD" id="cd05794">
    <property type="entry name" value="S1_EF-P_repeat_2"/>
    <property type="match status" value="1"/>
</dbReference>
<dbReference type="FunFam" id="2.40.50.140:FF:000004">
    <property type="entry name" value="Elongation factor P"/>
    <property type="match status" value="1"/>
</dbReference>
<dbReference type="FunFam" id="2.30.30.30:FF:000011">
    <property type="entry name" value="Elongation factor P-like protein"/>
    <property type="match status" value="1"/>
</dbReference>
<dbReference type="FunFam" id="2.40.50.140:FF:000053">
    <property type="entry name" value="Elongation factor P-like protein"/>
    <property type="match status" value="1"/>
</dbReference>
<dbReference type="Gene3D" id="2.30.30.30">
    <property type="match status" value="1"/>
</dbReference>
<dbReference type="Gene3D" id="2.40.50.140">
    <property type="entry name" value="Nucleic acid-binding proteins"/>
    <property type="match status" value="2"/>
</dbReference>
<dbReference type="HAMAP" id="MF_00646">
    <property type="entry name" value="EFP"/>
    <property type="match status" value="1"/>
</dbReference>
<dbReference type="InterPro" id="IPR015365">
    <property type="entry name" value="Elong-fact-P_C"/>
</dbReference>
<dbReference type="InterPro" id="IPR012340">
    <property type="entry name" value="NA-bd_OB-fold"/>
</dbReference>
<dbReference type="InterPro" id="IPR014722">
    <property type="entry name" value="Rib_uL2_dom2"/>
</dbReference>
<dbReference type="InterPro" id="IPR020599">
    <property type="entry name" value="Transl_elong_fac_P/YeiP"/>
</dbReference>
<dbReference type="InterPro" id="IPR013185">
    <property type="entry name" value="Transl_elong_KOW-like"/>
</dbReference>
<dbReference type="InterPro" id="IPR011897">
    <property type="entry name" value="Transl_elong_p-like_YeiP"/>
</dbReference>
<dbReference type="InterPro" id="IPR001059">
    <property type="entry name" value="Transl_elong_P/YeiP_cen"/>
</dbReference>
<dbReference type="InterPro" id="IPR013852">
    <property type="entry name" value="Transl_elong_P/YeiP_CS"/>
</dbReference>
<dbReference type="InterPro" id="IPR008991">
    <property type="entry name" value="Translation_prot_SH3-like_sf"/>
</dbReference>
<dbReference type="NCBIfam" id="NF001810">
    <property type="entry name" value="PRK00529.1"/>
    <property type="match status" value="1"/>
</dbReference>
<dbReference type="NCBIfam" id="NF003392">
    <property type="entry name" value="PRK04542.1"/>
    <property type="match status" value="1"/>
</dbReference>
<dbReference type="NCBIfam" id="TIGR02178">
    <property type="entry name" value="yeiP"/>
    <property type="match status" value="1"/>
</dbReference>
<dbReference type="PANTHER" id="PTHR30053">
    <property type="entry name" value="ELONGATION FACTOR P"/>
    <property type="match status" value="1"/>
</dbReference>
<dbReference type="PANTHER" id="PTHR30053:SF14">
    <property type="entry name" value="TRANSLATION ELONGATION FACTOR KOW-LIKE DOMAIN-CONTAINING PROTEIN"/>
    <property type="match status" value="1"/>
</dbReference>
<dbReference type="Pfam" id="PF01132">
    <property type="entry name" value="EFP"/>
    <property type="match status" value="1"/>
</dbReference>
<dbReference type="Pfam" id="PF08207">
    <property type="entry name" value="EFP_N"/>
    <property type="match status" value="1"/>
</dbReference>
<dbReference type="Pfam" id="PF09285">
    <property type="entry name" value="Elong-fact-P_C"/>
    <property type="match status" value="1"/>
</dbReference>
<dbReference type="PIRSF" id="PIRSF005901">
    <property type="entry name" value="EF-P"/>
    <property type="match status" value="1"/>
</dbReference>
<dbReference type="SMART" id="SM01185">
    <property type="entry name" value="EFP"/>
    <property type="match status" value="1"/>
</dbReference>
<dbReference type="SMART" id="SM00841">
    <property type="entry name" value="Elong-fact-P_C"/>
    <property type="match status" value="1"/>
</dbReference>
<dbReference type="SUPFAM" id="SSF50249">
    <property type="entry name" value="Nucleic acid-binding proteins"/>
    <property type="match status" value="2"/>
</dbReference>
<dbReference type="SUPFAM" id="SSF50104">
    <property type="entry name" value="Translation proteins SH3-like domain"/>
    <property type="match status" value="1"/>
</dbReference>
<dbReference type="PROSITE" id="PS01275">
    <property type="entry name" value="EFP"/>
    <property type="match status" value="1"/>
</dbReference>
<gene>
    <name type="ordered locus">KPK_1559</name>
</gene>